<organism>
    <name type="scientific">Rhodopseudomonas palustris (strain TIE-1)</name>
    <dbReference type="NCBI Taxonomy" id="395960"/>
    <lineage>
        <taxon>Bacteria</taxon>
        <taxon>Pseudomonadati</taxon>
        <taxon>Pseudomonadota</taxon>
        <taxon>Alphaproteobacteria</taxon>
        <taxon>Hyphomicrobiales</taxon>
        <taxon>Nitrobacteraceae</taxon>
        <taxon>Rhodopseudomonas</taxon>
    </lineage>
</organism>
<accession>B3QKG4</accession>
<reference key="1">
    <citation type="submission" date="2008-05" db="EMBL/GenBank/DDBJ databases">
        <title>Complete sequence of Rhodopseudomonas palustris TIE-1.</title>
        <authorList>
            <consortium name="US DOE Joint Genome Institute"/>
            <person name="Lucas S."/>
            <person name="Copeland A."/>
            <person name="Lapidus A."/>
            <person name="Glavina del Rio T."/>
            <person name="Dalin E."/>
            <person name="Tice H."/>
            <person name="Pitluck S."/>
            <person name="Chain P."/>
            <person name="Malfatti S."/>
            <person name="Shin M."/>
            <person name="Vergez L."/>
            <person name="Lang D."/>
            <person name="Schmutz J."/>
            <person name="Larimer F."/>
            <person name="Land M."/>
            <person name="Hauser L."/>
            <person name="Kyrpides N."/>
            <person name="Mikhailova N."/>
            <person name="Emerson D."/>
            <person name="Newman D.K."/>
            <person name="Roden E."/>
            <person name="Richardson P."/>
        </authorList>
    </citation>
    <scope>NUCLEOTIDE SEQUENCE [LARGE SCALE GENOMIC DNA]</scope>
    <source>
        <strain>TIE-1</strain>
    </source>
</reference>
<gene>
    <name evidence="1" type="primary">rpsI</name>
    <name type="ordered locus">Rpal_3107</name>
</gene>
<sequence length="160" mass="17497">MSETMQSLDQLAALKTTVTGADAPTYTKKVDKFGRAYATGKRKDAVARVWIKPGAGKITVNSREVETYFARPVLRMMIQQPLVAAARAGQYDVICTVAGGGLSGQAGAVRHGISKALTNFEPELRSVLKKGGFLTRDSRVVERKKYGKAKARRSFQFSKR</sequence>
<dbReference type="EMBL" id="CP001096">
    <property type="protein sequence ID" value="ACF01613.1"/>
    <property type="molecule type" value="Genomic_DNA"/>
</dbReference>
<dbReference type="RefSeq" id="WP_011158319.1">
    <property type="nucleotide sequence ID" value="NC_011004.1"/>
</dbReference>
<dbReference type="SMR" id="B3QKG4"/>
<dbReference type="GeneID" id="66893845"/>
<dbReference type="KEGG" id="rpt:Rpal_3107"/>
<dbReference type="HOGENOM" id="CLU_046483_2_0_5"/>
<dbReference type="OrthoDB" id="9803965at2"/>
<dbReference type="Proteomes" id="UP000001725">
    <property type="component" value="Chromosome"/>
</dbReference>
<dbReference type="GO" id="GO:0022627">
    <property type="term" value="C:cytosolic small ribosomal subunit"/>
    <property type="evidence" value="ECO:0007669"/>
    <property type="project" value="TreeGrafter"/>
</dbReference>
<dbReference type="GO" id="GO:0003723">
    <property type="term" value="F:RNA binding"/>
    <property type="evidence" value="ECO:0007669"/>
    <property type="project" value="TreeGrafter"/>
</dbReference>
<dbReference type="GO" id="GO:0003735">
    <property type="term" value="F:structural constituent of ribosome"/>
    <property type="evidence" value="ECO:0007669"/>
    <property type="project" value="InterPro"/>
</dbReference>
<dbReference type="GO" id="GO:0006412">
    <property type="term" value="P:translation"/>
    <property type="evidence" value="ECO:0007669"/>
    <property type="project" value="UniProtKB-UniRule"/>
</dbReference>
<dbReference type="FunFam" id="3.30.230.10:FF:000034">
    <property type="entry name" value="30S ribosomal protein S9"/>
    <property type="match status" value="1"/>
</dbReference>
<dbReference type="Gene3D" id="3.30.230.10">
    <property type="match status" value="1"/>
</dbReference>
<dbReference type="HAMAP" id="MF_00532_B">
    <property type="entry name" value="Ribosomal_uS9_B"/>
    <property type="match status" value="1"/>
</dbReference>
<dbReference type="InterPro" id="IPR020568">
    <property type="entry name" value="Ribosomal_Su5_D2-typ_SF"/>
</dbReference>
<dbReference type="InterPro" id="IPR000754">
    <property type="entry name" value="Ribosomal_uS9"/>
</dbReference>
<dbReference type="InterPro" id="IPR023035">
    <property type="entry name" value="Ribosomal_uS9_bac/plastid"/>
</dbReference>
<dbReference type="InterPro" id="IPR020574">
    <property type="entry name" value="Ribosomal_uS9_CS"/>
</dbReference>
<dbReference type="InterPro" id="IPR014721">
    <property type="entry name" value="Ribsml_uS5_D2-typ_fold_subgr"/>
</dbReference>
<dbReference type="NCBIfam" id="NF001099">
    <property type="entry name" value="PRK00132.1"/>
    <property type="match status" value="1"/>
</dbReference>
<dbReference type="PANTHER" id="PTHR21569">
    <property type="entry name" value="RIBOSOMAL PROTEIN S9"/>
    <property type="match status" value="1"/>
</dbReference>
<dbReference type="PANTHER" id="PTHR21569:SF1">
    <property type="entry name" value="SMALL RIBOSOMAL SUBUNIT PROTEIN US9M"/>
    <property type="match status" value="1"/>
</dbReference>
<dbReference type="Pfam" id="PF00380">
    <property type="entry name" value="Ribosomal_S9"/>
    <property type="match status" value="1"/>
</dbReference>
<dbReference type="SUPFAM" id="SSF54211">
    <property type="entry name" value="Ribosomal protein S5 domain 2-like"/>
    <property type="match status" value="1"/>
</dbReference>
<dbReference type="PROSITE" id="PS00360">
    <property type="entry name" value="RIBOSOMAL_S9"/>
    <property type="match status" value="1"/>
</dbReference>
<proteinExistence type="inferred from homology"/>
<name>RS9_RHOPT</name>
<evidence type="ECO:0000255" key="1">
    <source>
        <dbReference type="HAMAP-Rule" id="MF_00532"/>
    </source>
</evidence>
<evidence type="ECO:0000305" key="2"/>
<keyword id="KW-0687">Ribonucleoprotein</keyword>
<keyword id="KW-0689">Ribosomal protein</keyword>
<comment type="similarity">
    <text evidence="1">Belongs to the universal ribosomal protein uS9 family.</text>
</comment>
<feature type="chain" id="PRO_1000128162" description="Small ribosomal subunit protein uS9">
    <location>
        <begin position="1"/>
        <end position="160"/>
    </location>
</feature>
<protein>
    <recommendedName>
        <fullName evidence="1">Small ribosomal subunit protein uS9</fullName>
    </recommendedName>
    <alternativeName>
        <fullName evidence="2">30S ribosomal protein S9</fullName>
    </alternativeName>
</protein>